<name>LANC1_MOUSE</name>
<accession>O89112</accession>
<organism>
    <name type="scientific">Mus musculus</name>
    <name type="common">Mouse</name>
    <dbReference type="NCBI Taxonomy" id="10090"/>
    <lineage>
        <taxon>Eukaryota</taxon>
        <taxon>Metazoa</taxon>
        <taxon>Chordata</taxon>
        <taxon>Craniata</taxon>
        <taxon>Vertebrata</taxon>
        <taxon>Euteleostomi</taxon>
        <taxon>Mammalia</taxon>
        <taxon>Eutheria</taxon>
        <taxon>Euarchontoglires</taxon>
        <taxon>Glires</taxon>
        <taxon>Rodentia</taxon>
        <taxon>Myomorpha</taxon>
        <taxon>Muroidea</taxon>
        <taxon>Muridae</taxon>
        <taxon>Murinae</taxon>
        <taxon>Mus</taxon>
        <taxon>Mus</taxon>
    </lineage>
</organism>
<keyword id="KW-0007">Acetylation</keyword>
<keyword id="KW-1003">Cell membrane</keyword>
<keyword id="KW-0963">Cytoplasm</keyword>
<keyword id="KW-0472">Membrane</keyword>
<keyword id="KW-0479">Metal-binding</keyword>
<keyword id="KW-1185">Reference proteome</keyword>
<keyword id="KW-0808">Transferase</keyword>
<keyword id="KW-0862">Zinc</keyword>
<evidence type="ECO:0000250" key="1">
    <source>
        <dbReference type="UniProtKB" id="O43813"/>
    </source>
</evidence>
<evidence type="ECO:0000250" key="2">
    <source>
        <dbReference type="UniProtKB" id="Q9QX69"/>
    </source>
</evidence>
<evidence type="ECO:0000269" key="3">
    <source>
    </source>
</evidence>
<evidence type="ECO:0000269" key="4">
    <source>
    </source>
</evidence>
<evidence type="ECO:0000269" key="5">
    <source>
    </source>
</evidence>
<evidence type="ECO:0000305" key="6"/>
<evidence type="ECO:0000305" key="7">
    <source>
    </source>
</evidence>
<evidence type="ECO:0000305" key="8">
    <source>
    </source>
</evidence>
<evidence type="ECO:0000312" key="9">
    <source>
        <dbReference type="MGI" id="MGI:1336997"/>
    </source>
</evidence>
<reference key="1">
    <citation type="journal article" date="1998" name="Biochim. Biophys. Acta">
        <title>Molecular characterization and tissue-specific expression of a murine putative G-protein-coupled receptor.</title>
        <authorList>
            <person name="Mayer H."/>
            <person name="Breuss J."/>
            <person name="Ziegler S."/>
            <person name="Prohaska R."/>
        </authorList>
    </citation>
    <scope>NUCLEOTIDE SEQUENCE [MRNA]</scope>
    <scope>TISSUE SPECIFICITY</scope>
    <source>
        <strain>BALB/cJ</strain>
        <tissue>Brain</tissue>
        <tissue>Diaphragm</tissue>
        <tissue>Fetal brain</tissue>
    </source>
</reference>
<reference key="2">
    <citation type="journal article" date="2001" name="Cytogenet. Cell Genet.">
        <title>Organization and chromosomal localization of the human and mouse genes coding for LanC-like protein 1 (LANCL1).</title>
        <authorList>
            <person name="Mayer H."/>
            <person name="Bauer H."/>
            <person name="Prohaska R."/>
        </authorList>
    </citation>
    <scope>NUCLEOTIDE SEQUENCE [GENOMIC DNA / MRNA]</scope>
    <source>
        <tissue>Brain</tissue>
        <tissue>Testis</tissue>
    </source>
</reference>
<reference key="3">
    <citation type="journal article" date="2004" name="Genome Res.">
        <title>The status, quality, and expansion of the NIH full-length cDNA project: the Mammalian Gene Collection (MGC).</title>
        <authorList>
            <consortium name="The MGC Project Team"/>
        </authorList>
    </citation>
    <scope>NUCLEOTIDE SEQUENCE [LARGE SCALE MRNA]</scope>
    <source>
        <strain>C57BL/6J</strain>
        <tissue>Mammary gland</tissue>
        <tissue>Olfactory epithelium</tissue>
    </source>
</reference>
<reference key="4">
    <citation type="journal article" date="2007" name="Biochemistry">
        <title>Identification of lanthionine synthase C-like protein-1 as a prominent glutathione binding protein expressed in the mammalian central nervous system.</title>
        <authorList>
            <person name="Chung C.H.Y."/>
            <person name="Kurien B.T."/>
            <person name="Mehta P."/>
            <person name="Mhatre M."/>
            <person name="Mou S."/>
            <person name="Pye Q.N."/>
            <person name="Stewart C."/>
            <person name="West M."/>
            <person name="Williamson K.S."/>
            <person name="Post J."/>
            <person name="Liu L."/>
            <person name="Wang R."/>
            <person name="Hensley K."/>
        </authorList>
    </citation>
    <scope>TISSUE SPECIFICITY</scope>
</reference>
<reference key="5">
    <citation type="journal article" date="2010" name="Cell">
        <title>A tissue-specific atlas of mouse protein phosphorylation and expression.</title>
        <authorList>
            <person name="Huttlin E.L."/>
            <person name="Jedrychowski M.P."/>
            <person name="Elias J.E."/>
            <person name="Goswami T."/>
            <person name="Rad R."/>
            <person name="Beausoleil S.A."/>
            <person name="Villen J."/>
            <person name="Haas W."/>
            <person name="Sowa M.E."/>
            <person name="Gygi S.P."/>
        </authorList>
    </citation>
    <scope>IDENTIFICATION BY MASS SPECTROMETRY [LARGE SCALE ANALYSIS]</scope>
    <source>
        <tissue>Brain</tissue>
        <tissue>Heart</tissue>
        <tissue>Kidney</tissue>
        <tissue>Liver</tissue>
        <tissue>Lung</tissue>
        <tissue>Pancreas</tissue>
        <tissue>Spleen</tissue>
        <tissue>Testis</tissue>
    </source>
</reference>
<reference key="6">
    <citation type="journal article" date="2014" name="Dev. Cell">
        <title>Developmental and activity-dependent expression of LanCL1 confers antioxidant activity required for neuronal survival.</title>
        <authorList>
            <person name="Huang C."/>
            <person name="Chen M."/>
            <person name="Pang D."/>
            <person name="Bi D."/>
            <person name="Zou Y."/>
            <person name="Xia X."/>
            <person name="Yang W."/>
            <person name="Luo L."/>
            <person name="Deng R."/>
            <person name="Tan H."/>
            <person name="Zhou L."/>
            <person name="Yu S."/>
            <person name="Guo L."/>
            <person name="Du X."/>
            <person name="Cui Y."/>
            <person name="Hu J."/>
            <person name="Mao Q."/>
            <person name="Worley P.F."/>
            <person name="Xiao B."/>
        </authorList>
    </citation>
    <scope>FUNCTION</scope>
    <scope>TISSUE SPECIFICITY</scope>
    <scope>INDUCTION</scope>
    <scope>DISRUPTION PHENOTYPE</scope>
    <scope>MUTAGENESIS OF ARG-4</scope>
    <scope>CATALYTIC ACTIVITY</scope>
</reference>
<gene>
    <name evidence="9" type="primary">Lancl1</name>
    <name evidence="2" type="synonym">Gpr69a</name>
</gene>
<dbReference type="EC" id="2.5.1.18" evidence="4"/>
<dbReference type="EMBL" id="Y11550">
    <property type="protein sequence ID" value="CAA72314.1"/>
    <property type="molecule type" value="mRNA"/>
</dbReference>
<dbReference type="EMBL" id="Y16518">
    <property type="protein sequence ID" value="CAA76269.1"/>
    <property type="molecule type" value="mRNA"/>
</dbReference>
<dbReference type="EMBL" id="AJ294535">
    <property type="protein sequence ID" value="CAC69241.1"/>
    <property type="molecule type" value="mRNA"/>
</dbReference>
<dbReference type="EMBL" id="AJ289603">
    <property type="protein sequence ID" value="CAC40153.1"/>
    <property type="molecule type" value="Genomic_DNA"/>
</dbReference>
<dbReference type="EMBL" id="AJ289604">
    <property type="protein sequence ID" value="CAC40153.1"/>
    <property type="status" value="JOINED"/>
    <property type="molecule type" value="Genomic_DNA"/>
</dbReference>
<dbReference type="EMBL" id="AJ289605">
    <property type="protein sequence ID" value="CAC40153.1"/>
    <property type="status" value="JOINED"/>
    <property type="molecule type" value="Genomic_DNA"/>
</dbReference>
<dbReference type="EMBL" id="AJ289606">
    <property type="protein sequence ID" value="CAC40153.1"/>
    <property type="status" value="JOINED"/>
    <property type="molecule type" value="Genomic_DNA"/>
</dbReference>
<dbReference type="EMBL" id="AJ289607">
    <property type="protein sequence ID" value="CAC40153.1"/>
    <property type="status" value="JOINED"/>
    <property type="molecule type" value="Genomic_DNA"/>
</dbReference>
<dbReference type="EMBL" id="AJ289608">
    <property type="protein sequence ID" value="CAC40153.1"/>
    <property type="status" value="JOINED"/>
    <property type="molecule type" value="Genomic_DNA"/>
</dbReference>
<dbReference type="EMBL" id="BC058560">
    <property type="protein sequence ID" value="AAH58560.1"/>
    <property type="molecule type" value="mRNA"/>
</dbReference>
<dbReference type="CCDS" id="CCDS15025.1"/>
<dbReference type="RefSeq" id="NP_001177913.1">
    <property type="nucleotide sequence ID" value="NM_001190984.1"/>
</dbReference>
<dbReference type="RefSeq" id="NP_001177914.1">
    <property type="nucleotide sequence ID" value="NM_001190985.1"/>
</dbReference>
<dbReference type="RefSeq" id="NP_067270.1">
    <property type="nucleotide sequence ID" value="NM_021295.3"/>
</dbReference>
<dbReference type="SMR" id="O89112"/>
<dbReference type="BioGRID" id="200033">
    <property type="interactions" value="10"/>
</dbReference>
<dbReference type="FunCoup" id="O89112">
    <property type="interactions" value="1066"/>
</dbReference>
<dbReference type="IntAct" id="O89112">
    <property type="interactions" value="4"/>
</dbReference>
<dbReference type="STRING" id="10090.ENSMUSP00000109612"/>
<dbReference type="GlyGen" id="O89112">
    <property type="glycosylation" value="2 sites, 1 N-linked glycan (1 site), 1 O-linked glycan (1 site)"/>
</dbReference>
<dbReference type="iPTMnet" id="O89112"/>
<dbReference type="PhosphoSitePlus" id="O89112"/>
<dbReference type="SwissPalm" id="O89112"/>
<dbReference type="jPOST" id="O89112"/>
<dbReference type="PaxDb" id="10090-ENSMUSP00000109612"/>
<dbReference type="PeptideAtlas" id="O89112"/>
<dbReference type="ProteomicsDB" id="290007"/>
<dbReference type="Pumba" id="O89112"/>
<dbReference type="Antibodypedia" id="34207">
    <property type="antibodies" value="114 antibodies from 21 providers"/>
</dbReference>
<dbReference type="DNASU" id="14768"/>
<dbReference type="Ensembl" id="ENSMUST00000027149.12">
    <property type="protein sequence ID" value="ENSMUSP00000027149.6"/>
    <property type="gene ID" value="ENSMUSG00000026000.17"/>
</dbReference>
<dbReference type="Ensembl" id="ENSMUST00000113979.10">
    <property type="protein sequence ID" value="ENSMUSP00000109612.4"/>
    <property type="gene ID" value="ENSMUSG00000026000.17"/>
</dbReference>
<dbReference type="Ensembl" id="ENSMUST00000119559.8">
    <property type="protein sequence ID" value="ENSMUSP00000113080.2"/>
    <property type="gene ID" value="ENSMUSG00000026000.17"/>
</dbReference>
<dbReference type="GeneID" id="14768"/>
<dbReference type="KEGG" id="mmu:14768"/>
<dbReference type="UCSC" id="uc007biv.1">
    <property type="organism name" value="mouse"/>
</dbReference>
<dbReference type="AGR" id="MGI:1336997"/>
<dbReference type="CTD" id="10314"/>
<dbReference type="MGI" id="MGI:1336997">
    <property type="gene designation" value="Lancl1"/>
</dbReference>
<dbReference type="VEuPathDB" id="HostDB:ENSMUSG00000026000"/>
<dbReference type="eggNOG" id="KOG2787">
    <property type="taxonomic scope" value="Eukaryota"/>
</dbReference>
<dbReference type="GeneTree" id="ENSGT00530000063186"/>
<dbReference type="HOGENOM" id="CLU_036244_0_0_1"/>
<dbReference type="InParanoid" id="O89112"/>
<dbReference type="OMA" id="PCVDDNR"/>
<dbReference type="OrthoDB" id="10257263at2759"/>
<dbReference type="PhylomeDB" id="O89112"/>
<dbReference type="TreeFam" id="TF300068"/>
<dbReference type="BioGRID-ORCS" id="14768">
    <property type="hits" value="2 hits in 78 CRISPR screens"/>
</dbReference>
<dbReference type="CD-CODE" id="CE726F99">
    <property type="entry name" value="Postsynaptic density"/>
</dbReference>
<dbReference type="ChiTaRS" id="Lancl1">
    <property type="organism name" value="mouse"/>
</dbReference>
<dbReference type="PRO" id="PR:O89112"/>
<dbReference type="Proteomes" id="UP000000589">
    <property type="component" value="Chromosome 1"/>
</dbReference>
<dbReference type="RNAct" id="O89112">
    <property type="molecule type" value="protein"/>
</dbReference>
<dbReference type="Bgee" id="ENSMUSG00000026000">
    <property type="expression patterns" value="Expressed in seminiferous tubule of testis and 284 other cell types or tissues"/>
</dbReference>
<dbReference type="ExpressionAtlas" id="O89112">
    <property type="expression patterns" value="baseline and differential"/>
</dbReference>
<dbReference type="GO" id="GO:0005737">
    <property type="term" value="C:cytoplasm"/>
    <property type="evidence" value="ECO:0007669"/>
    <property type="project" value="UniProtKB-SubCell"/>
</dbReference>
<dbReference type="GO" id="GO:0016020">
    <property type="term" value="C:membrane"/>
    <property type="evidence" value="ECO:0007669"/>
    <property type="project" value="UniProtKB-KW"/>
</dbReference>
<dbReference type="GO" id="GO:0043295">
    <property type="term" value="F:glutathione binding"/>
    <property type="evidence" value="ECO:0000250"/>
    <property type="project" value="UniProtKB"/>
</dbReference>
<dbReference type="GO" id="GO:0004364">
    <property type="term" value="F:glutathione transferase activity"/>
    <property type="evidence" value="ECO:0000315"/>
    <property type="project" value="UniProtKB"/>
</dbReference>
<dbReference type="GO" id="GO:0050750">
    <property type="term" value="F:low-density lipoprotein particle receptor binding"/>
    <property type="evidence" value="ECO:0000266"/>
    <property type="project" value="MGI"/>
</dbReference>
<dbReference type="GO" id="GO:0017124">
    <property type="term" value="F:SH3 domain binding"/>
    <property type="evidence" value="ECO:0007669"/>
    <property type="project" value="Ensembl"/>
</dbReference>
<dbReference type="GO" id="GO:0008270">
    <property type="term" value="F:zinc ion binding"/>
    <property type="evidence" value="ECO:0000250"/>
    <property type="project" value="UniProtKB"/>
</dbReference>
<dbReference type="GO" id="GO:0005975">
    <property type="term" value="P:carbohydrate metabolic process"/>
    <property type="evidence" value="ECO:0007669"/>
    <property type="project" value="InterPro"/>
</dbReference>
<dbReference type="GO" id="GO:1990748">
    <property type="term" value="P:cellular detoxification"/>
    <property type="evidence" value="ECO:0000315"/>
    <property type="project" value="UniProtKB"/>
</dbReference>
<dbReference type="GO" id="GO:0031179">
    <property type="term" value="P:peptide modification"/>
    <property type="evidence" value="ECO:0007669"/>
    <property type="project" value="InterPro"/>
</dbReference>
<dbReference type="CDD" id="cd04794">
    <property type="entry name" value="euk_LANCL"/>
    <property type="match status" value="1"/>
</dbReference>
<dbReference type="FunFam" id="1.50.10.10:FF:000019">
    <property type="entry name" value="LanC-like protein 1"/>
    <property type="match status" value="1"/>
</dbReference>
<dbReference type="Gene3D" id="1.50.10.10">
    <property type="match status" value="1"/>
</dbReference>
<dbReference type="InterPro" id="IPR012341">
    <property type="entry name" value="6hp_glycosidase-like_sf"/>
</dbReference>
<dbReference type="InterPro" id="IPR007822">
    <property type="entry name" value="LANC-like"/>
</dbReference>
<dbReference type="InterPro" id="IPR020464">
    <property type="entry name" value="LanC-like_prot_euk"/>
</dbReference>
<dbReference type="PANTHER" id="PTHR12736:SF5">
    <property type="entry name" value="GLUTATHIONE S-TRANSFERASE LANCL1"/>
    <property type="match status" value="1"/>
</dbReference>
<dbReference type="PANTHER" id="PTHR12736">
    <property type="entry name" value="LANC-LIKE PROTEIN"/>
    <property type="match status" value="1"/>
</dbReference>
<dbReference type="Pfam" id="PF05147">
    <property type="entry name" value="LANC_like"/>
    <property type="match status" value="1"/>
</dbReference>
<dbReference type="PRINTS" id="PR01951">
    <property type="entry name" value="LANCEUKARYTE"/>
</dbReference>
<dbReference type="PRINTS" id="PR01950">
    <property type="entry name" value="LANCSUPER"/>
</dbReference>
<dbReference type="SMART" id="SM01260">
    <property type="entry name" value="LANC_like"/>
    <property type="match status" value="1"/>
</dbReference>
<dbReference type="SUPFAM" id="SSF158745">
    <property type="entry name" value="LanC-like"/>
    <property type="match status" value="1"/>
</dbReference>
<proteinExistence type="evidence at protein level"/>
<comment type="function">
    <text evidence="1 4">Functions as a glutathione transferase (PubMed:25158856). Catalyzes conjugation of the glutathione (GSH) to artificial substrates 1-chloro-2,4-dinitrobenzene (CDNB) and p-nitrophenyl acetate (PubMed:25158856). Mitigates neuronal oxidative stress during normal postnatal development and in response to oxidative stresses probably through GSH antioxidant defense mechanism (PubMed:25158856). May play a role in EPS8 signaling. Binds glutathione (By similarity).</text>
</comment>
<comment type="catalytic activity">
    <reaction evidence="4">
        <text>RX + glutathione = an S-substituted glutathione + a halide anion + H(+)</text>
        <dbReference type="Rhea" id="RHEA:16437"/>
        <dbReference type="ChEBI" id="CHEBI:15378"/>
        <dbReference type="ChEBI" id="CHEBI:16042"/>
        <dbReference type="ChEBI" id="CHEBI:17792"/>
        <dbReference type="ChEBI" id="CHEBI:57925"/>
        <dbReference type="ChEBI" id="CHEBI:90779"/>
        <dbReference type="EC" id="2.5.1.18"/>
    </reaction>
</comment>
<comment type="catalytic activity">
    <reaction evidence="4">
        <text>1-chloro-2,4-dinitrobenzene + glutathione = 2,4-dinitrophenyl-S-glutathione + chloride + H(+)</text>
        <dbReference type="Rhea" id="RHEA:51220"/>
        <dbReference type="ChEBI" id="CHEBI:15378"/>
        <dbReference type="ChEBI" id="CHEBI:17996"/>
        <dbReference type="ChEBI" id="CHEBI:34718"/>
        <dbReference type="ChEBI" id="CHEBI:57925"/>
        <dbReference type="ChEBI" id="CHEBI:133977"/>
        <dbReference type="EC" id="2.5.1.18"/>
    </reaction>
</comment>
<comment type="biophysicochemical properties">
    <kinetics>
        <KM evidence="4">1.93 mM for 1-chloro-2,4-dinitrobenzene</KM>
        <Vmax evidence="4">1087.0 nmol/min/mg enzyme</Vmax>
    </kinetics>
</comment>
<comment type="subunit">
    <text evidence="1">Interacts with the C-terminal of STOM (By similarity). Interacts with the EPS8 SH3 domain. Interaction with EPS8 is inhibited by glutathione binding (By similarity).</text>
</comment>
<comment type="subcellular location">
    <subcellularLocation>
        <location evidence="1">Cytoplasm</location>
    </subcellularLocation>
    <subcellularLocation>
        <location evidence="1">Cell membrane</location>
        <topology evidence="1">Peripheral membrane protein</topology>
    </subcellularLocation>
</comment>
<comment type="tissue specificity">
    <text evidence="3 4 5">Detected in spinal cord (at protein level). Ubiquitous. Strongly expressed in brain, testis, alveolar macrophages and epithelial cells of the lung, kidney and intestine (PubMed:17305318, PubMed:9714732). Expression in brain increases during the first postnatal month and remaining high in adult (PubMed:25158856).</text>
</comment>
<comment type="induction">
    <text evidence="4">Induced by oxidative stress.</text>
</comment>
<comment type="disruption phenotype">
    <text evidence="4">Knockout mice are viable. During later postnatal development, mice demonstrate prominent neuronal degeneration.</text>
</comment>
<comment type="miscellaneous">
    <text evidence="8">Was originally thought to be a G-protein coupled receptor.</text>
</comment>
<comment type="similarity">
    <text evidence="6">Belongs to the LanC-like protein family.</text>
</comment>
<sequence>MAQRAFPNPYADYNKSLAENYFDSTGRLTPEFSHRLTNKIRELLQQMERGLKSADPRDGTGYTGWAGIAVLYLHLHNVFGDPAYLQMAHSYVKQSLNCLSRRSITFLCGDAGPLAVAAVLYHKMNSEKQAEECITRLIHLNKIDPHVPNEMLYGRIGYIFALLFVNKNFGEEKIPQSHIQQICENILTSGENLSRKRNLAAKSPLMYEWYQEYYVGAAHGLAGIYYYLMQPSLQVNQGKLHSLVKPSVDFVCRLKFPSGNYPPCLDDTRDLLVHWCHGAPGVIYMLIQAYKVFKEERYLCDAQQCADVIWQYGLLKKGYGLCHGAAGNAYAFLALYNLTQDLKYLYRACKFAEWCLDYGEHGCRTADTPFSLFEGMAGTIYFLADLLVPTKAKFPAFEL</sequence>
<protein>
    <recommendedName>
        <fullName evidence="7">Glutathione S-transferase LANCL1</fullName>
        <ecNumber evidence="4">2.5.1.18</ecNumber>
    </recommendedName>
    <alternativeName>
        <fullName>40 kDa erythrocyte membrane protein</fullName>
        <shortName evidence="2">p40</shortName>
    </alternativeName>
    <alternativeName>
        <fullName evidence="1">LanC-like protein 1</fullName>
    </alternativeName>
</protein>
<feature type="initiator methionine" description="Removed" evidence="1">
    <location>
        <position position="1"/>
    </location>
</feature>
<feature type="chain" id="PRO_0000191269" description="Glutathione S-transferase LANCL1">
    <location>
        <begin position="2"/>
        <end position="399"/>
    </location>
</feature>
<feature type="binding site" evidence="1">
    <location>
        <position position="276"/>
    </location>
    <ligand>
        <name>Zn(2+)</name>
        <dbReference type="ChEBI" id="CHEBI:29105"/>
    </ligand>
</feature>
<feature type="binding site" evidence="1">
    <location>
        <position position="317"/>
    </location>
    <ligand>
        <name>glutathione</name>
        <dbReference type="ChEBI" id="CHEBI:57925"/>
    </ligand>
</feature>
<feature type="binding site" evidence="1">
    <location>
        <position position="322"/>
    </location>
    <ligand>
        <name>Zn(2+)</name>
        <dbReference type="ChEBI" id="CHEBI:29105"/>
    </ligand>
</feature>
<feature type="binding site" evidence="1">
    <location>
        <position position="323"/>
    </location>
    <ligand>
        <name>Zn(2+)</name>
        <dbReference type="ChEBI" id="CHEBI:29105"/>
    </ligand>
</feature>
<feature type="binding site" evidence="1">
    <location>
        <begin position="364"/>
        <end position="367"/>
    </location>
    <ligand>
        <name>glutathione</name>
        <dbReference type="ChEBI" id="CHEBI:57925"/>
    </ligand>
</feature>
<feature type="modified residue" description="N-acetylalanine" evidence="1">
    <location>
        <position position="2"/>
    </location>
</feature>
<feature type="modified residue" description="N6-acetyllysine" evidence="1">
    <location>
        <position position="142"/>
    </location>
</feature>
<feature type="mutagenesis site" description="Does not increase glutathione transferase activity and reduces cellular protection." evidence="4">
    <original>R</original>
    <variation>A</variation>
    <location>
        <position position="4"/>
    </location>
</feature>